<organism>
    <name type="scientific">Polaromonas naphthalenivorans (strain CJ2)</name>
    <dbReference type="NCBI Taxonomy" id="365044"/>
    <lineage>
        <taxon>Bacteria</taxon>
        <taxon>Pseudomonadati</taxon>
        <taxon>Pseudomonadota</taxon>
        <taxon>Betaproteobacteria</taxon>
        <taxon>Burkholderiales</taxon>
        <taxon>Comamonadaceae</taxon>
        <taxon>Polaromonas</taxon>
    </lineage>
</organism>
<feature type="chain" id="PRO_0000308874" description="DNA-directed RNA polymerase subunit beta'">
    <location>
        <begin position="1"/>
        <end position="1404"/>
    </location>
</feature>
<feature type="region of interest" description="Disordered" evidence="2">
    <location>
        <begin position="1377"/>
        <end position="1404"/>
    </location>
</feature>
<feature type="binding site" evidence="1">
    <location>
        <position position="70"/>
    </location>
    <ligand>
        <name>Zn(2+)</name>
        <dbReference type="ChEBI" id="CHEBI:29105"/>
        <label>1</label>
    </ligand>
</feature>
<feature type="binding site" evidence="1">
    <location>
        <position position="72"/>
    </location>
    <ligand>
        <name>Zn(2+)</name>
        <dbReference type="ChEBI" id="CHEBI:29105"/>
        <label>1</label>
    </ligand>
</feature>
<feature type="binding site" evidence="1">
    <location>
        <position position="85"/>
    </location>
    <ligand>
        <name>Zn(2+)</name>
        <dbReference type="ChEBI" id="CHEBI:29105"/>
        <label>1</label>
    </ligand>
</feature>
<feature type="binding site" evidence="1">
    <location>
        <position position="88"/>
    </location>
    <ligand>
        <name>Zn(2+)</name>
        <dbReference type="ChEBI" id="CHEBI:29105"/>
        <label>1</label>
    </ligand>
</feature>
<feature type="binding site" evidence="1">
    <location>
        <position position="458"/>
    </location>
    <ligand>
        <name>Mg(2+)</name>
        <dbReference type="ChEBI" id="CHEBI:18420"/>
    </ligand>
</feature>
<feature type="binding site" evidence="1">
    <location>
        <position position="460"/>
    </location>
    <ligand>
        <name>Mg(2+)</name>
        <dbReference type="ChEBI" id="CHEBI:18420"/>
    </ligand>
</feature>
<feature type="binding site" evidence="1">
    <location>
        <position position="462"/>
    </location>
    <ligand>
        <name>Mg(2+)</name>
        <dbReference type="ChEBI" id="CHEBI:18420"/>
    </ligand>
</feature>
<feature type="binding site" evidence="1">
    <location>
        <position position="813"/>
    </location>
    <ligand>
        <name>Zn(2+)</name>
        <dbReference type="ChEBI" id="CHEBI:29105"/>
        <label>2</label>
    </ligand>
</feature>
<feature type="binding site" evidence="1">
    <location>
        <position position="887"/>
    </location>
    <ligand>
        <name>Zn(2+)</name>
        <dbReference type="ChEBI" id="CHEBI:29105"/>
        <label>2</label>
    </ligand>
</feature>
<feature type="binding site" evidence="1">
    <location>
        <position position="894"/>
    </location>
    <ligand>
        <name>Zn(2+)</name>
        <dbReference type="ChEBI" id="CHEBI:29105"/>
        <label>2</label>
    </ligand>
</feature>
<feature type="binding site" evidence="1">
    <location>
        <position position="897"/>
    </location>
    <ligand>
        <name>Zn(2+)</name>
        <dbReference type="ChEBI" id="CHEBI:29105"/>
        <label>2</label>
    </ligand>
</feature>
<accession>A1VTF7</accession>
<reference key="1">
    <citation type="journal article" date="2009" name="Environ. Microbiol.">
        <title>The genome of Polaromonas naphthalenivorans strain CJ2, isolated from coal tar-contaminated sediment, reveals physiological and metabolic versatility and evolution through extensive horizontal gene transfer.</title>
        <authorList>
            <person name="Yagi J.M."/>
            <person name="Sims D."/>
            <person name="Brettin T."/>
            <person name="Bruce D."/>
            <person name="Madsen E.L."/>
        </authorList>
    </citation>
    <scope>NUCLEOTIDE SEQUENCE [LARGE SCALE GENOMIC DNA]</scope>
    <source>
        <strain>CJ2</strain>
    </source>
</reference>
<evidence type="ECO:0000255" key="1">
    <source>
        <dbReference type="HAMAP-Rule" id="MF_01322"/>
    </source>
</evidence>
<evidence type="ECO:0000256" key="2">
    <source>
        <dbReference type="SAM" id="MobiDB-lite"/>
    </source>
</evidence>
<keyword id="KW-0240">DNA-directed RNA polymerase</keyword>
<keyword id="KW-0460">Magnesium</keyword>
<keyword id="KW-0479">Metal-binding</keyword>
<keyword id="KW-0548">Nucleotidyltransferase</keyword>
<keyword id="KW-1185">Reference proteome</keyword>
<keyword id="KW-0804">Transcription</keyword>
<keyword id="KW-0808">Transferase</keyword>
<keyword id="KW-0862">Zinc</keyword>
<proteinExistence type="inferred from homology"/>
<gene>
    <name evidence="1" type="primary">rpoC</name>
    <name type="ordered locus">Pnap_3639</name>
</gene>
<sequence length="1404" mass="154619">MKSLLDLFKQFTPDEHFDAIKIGMASPEKIRSWSFGEVKKPETINYRTFKPERDGLFCAKIFGPIKDYECLCGKYKRLKHRGVICEKCGVEVTQTKVRRERMGHIDLAAPCAHIWFLKSLPSRLGLVLDMTLRDIERVLYFEAYVVTDPGMTPLKKFSIMSEDDFDAKRKEYGDEYTAKMGAEGIKDLLEGLDLDIEIDKLRNDLTGSEIKIKKNAKRLKLMEGFKKSGIKPEWMVLDVLPVLPPDLRPLVPLDGGRFATSDLNDLYRRVINRNSRLRRLLELKAPEIIARNEKRMLQEAVDSLLDNGRRGKAMTGANKRALKSLADMIKGKSGRFRQNLLGKRVDYSGRSVITVGPTLKLHQCGLPKLMALELFKPFIFAQLEVRGIATTIKAAKKEVETGTPVVWDILEEVIKEHPVMLNRAPTLHRLGIQAFEPILIEGKAIQLHPLVCSAFNADFDGDQMAVHVPLSVEAQMEARTLMLASNNILFPANGEPSIVPSQDVVLGLYYTTRDRTNGKGEGLVFSDTGEVRRAFDAGELDLNARISVRLTEWSKDKETNEFVPSTKLWETTGGRALLSEILPKGLPFSNINKALKKKEISKLINVSFRKCGLKETVVFADKLLQSGFRLATKAGISICIEDMLVPKEKTSIIAHAQKEVKEIEQQYTSGLVTAGERYNKVVDIWGKSGDEVSKAMMAQLSKEKVIDRHGNLVEQDSFNSIYMMADSGARGSAAQIRQVAGMRGLMAKPDGSIIETPITANFREGLNVLEYFISTHGARKGLADTALKTANSGYLTRRLCDVVQDLVVTEDDCGTLDGSVMRAIVEGGEVIESLRDRVLGRTIVEDVLHPENRSVLIKAGVMLDEDLIEELEAAGVDEVKVRTALTCETRFGLCAKCYGRDLGRGGLINIGEAVGIIAAQSIGEPGTQLTMRTFHIGGAASRAAIASSVEAKSNGVIGFNAPMRYVTNGKGDLVVIARSGEIIIHDEHGRERERHKVPYGATLTVKIDQTIKAGAILANWDPLTRPIITEFAGKVQFENVEEGVTVAKQVDDVTGLSTLVVIDPKRRGATKVIRPQVKLIDATGNEVKIPGTDHSVTIGFQIGALVQVRDGQDVGPGEVLARIPIEGQKTRDITGGLPRVAELFEARTPKDKGTLAEMTGTVSFGKETKGKVRLQITDPEGKVWEDLVPKEKNILVHEGQVVNKGESIVDGPADPQDILRLLGVAELARYIVDEVQDVYRLQGVKINDKHIEVIVRQMLRRVVVENVGDTSYIAGEQVERSALLDVNDALRADGKIPATFSNLLLGITKASLSTDSFISAASFQETTRVLTEAAIMGKRDELRGLKENVIVGRLIPAGTGMAYHEARKAKDLMDDSERRAIAESEAAELEASQAETSDENAAAE</sequence>
<comment type="function">
    <text evidence="1">DNA-dependent RNA polymerase catalyzes the transcription of DNA into RNA using the four ribonucleoside triphosphates as substrates.</text>
</comment>
<comment type="catalytic activity">
    <reaction evidence="1">
        <text>RNA(n) + a ribonucleoside 5'-triphosphate = RNA(n+1) + diphosphate</text>
        <dbReference type="Rhea" id="RHEA:21248"/>
        <dbReference type="Rhea" id="RHEA-COMP:14527"/>
        <dbReference type="Rhea" id="RHEA-COMP:17342"/>
        <dbReference type="ChEBI" id="CHEBI:33019"/>
        <dbReference type="ChEBI" id="CHEBI:61557"/>
        <dbReference type="ChEBI" id="CHEBI:140395"/>
        <dbReference type="EC" id="2.7.7.6"/>
    </reaction>
</comment>
<comment type="cofactor">
    <cofactor evidence="1">
        <name>Mg(2+)</name>
        <dbReference type="ChEBI" id="CHEBI:18420"/>
    </cofactor>
    <text evidence="1">Binds 1 Mg(2+) ion per subunit.</text>
</comment>
<comment type="cofactor">
    <cofactor evidence="1">
        <name>Zn(2+)</name>
        <dbReference type="ChEBI" id="CHEBI:29105"/>
    </cofactor>
    <text evidence="1">Binds 2 Zn(2+) ions per subunit.</text>
</comment>
<comment type="subunit">
    <text evidence="1">The RNAP catalytic core consists of 2 alpha, 1 beta, 1 beta' and 1 omega subunit. When a sigma factor is associated with the core the holoenzyme is formed, which can initiate transcription.</text>
</comment>
<comment type="similarity">
    <text evidence="1">Belongs to the RNA polymerase beta' chain family.</text>
</comment>
<name>RPOC_POLNA</name>
<dbReference type="EC" id="2.7.7.6" evidence="1"/>
<dbReference type="EMBL" id="CP000529">
    <property type="protein sequence ID" value="ABM38935.1"/>
    <property type="molecule type" value="Genomic_DNA"/>
</dbReference>
<dbReference type="RefSeq" id="WP_011803002.1">
    <property type="nucleotide sequence ID" value="NC_008781.1"/>
</dbReference>
<dbReference type="SMR" id="A1VTF7"/>
<dbReference type="STRING" id="365044.Pnap_3639"/>
<dbReference type="KEGG" id="pna:Pnap_3639"/>
<dbReference type="eggNOG" id="COG0086">
    <property type="taxonomic scope" value="Bacteria"/>
</dbReference>
<dbReference type="HOGENOM" id="CLU_000524_3_1_4"/>
<dbReference type="OrthoDB" id="9815296at2"/>
<dbReference type="Proteomes" id="UP000000644">
    <property type="component" value="Chromosome"/>
</dbReference>
<dbReference type="GO" id="GO:0000428">
    <property type="term" value="C:DNA-directed RNA polymerase complex"/>
    <property type="evidence" value="ECO:0007669"/>
    <property type="project" value="UniProtKB-KW"/>
</dbReference>
<dbReference type="GO" id="GO:0003677">
    <property type="term" value="F:DNA binding"/>
    <property type="evidence" value="ECO:0007669"/>
    <property type="project" value="UniProtKB-UniRule"/>
</dbReference>
<dbReference type="GO" id="GO:0003899">
    <property type="term" value="F:DNA-directed RNA polymerase activity"/>
    <property type="evidence" value="ECO:0007669"/>
    <property type="project" value="UniProtKB-UniRule"/>
</dbReference>
<dbReference type="GO" id="GO:0000287">
    <property type="term" value="F:magnesium ion binding"/>
    <property type="evidence" value="ECO:0007669"/>
    <property type="project" value="UniProtKB-UniRule"/>
</dbReference>
<dbReference type="GO" id="GO:0008270">
    <property type="term" value="F:zinc ion binding"/>
    <property type="evidence" value="ECO:0007669"/>
    <property type="project" value="UniProtKB-UniRule"/>
</dbReference>
<dbReference type="GO" id="GO:0006351">
    <property type="term" value="P:DNA-templated transcription"/>
    <property type="evidence" value="ECO:0007669"/>
    <property type="project" value="UniProtKB-UniRule"/>
</dbReference>
<dbReference type="CDD" id="cd02655">
    <property type="entry name" value="RNAP_beta'_C"/>
    <property type="match status" value="1"/>
</dbReference>
<dbReference type="CDD" id="cd01609">
    <property type="entry name" value="RNAP_beta'_N"/>
    <property type="match status" value="1"/>
</dbReference>
<dbReference type="FunFam" id="1.10.132.30:FF:000003">
    <property type="entry name" value="DNA-directed RNA polymerase subunit beta"/>
    <property type="match status" value="1"/>
</dbReference>
<dbReference type="FunFam" id="1.10.150.390:FF:000002">
    <property type="entry name" value="DNA-directed RNA polymerase subunit beta"/>
    <property type="match status" value="1"/>
</dbReference>
<dbReference type="FunFam" id="4.10.860.120:FF:000001">
    <property type="entry name" value="DNA-directed RNA polymerase subunit beta"/>
    <property type="match status" value="1"/>
</dbReference>
<dbReference type="Gene3D" id="1.10.132.30">
    <property type="match status" value="1"/>
</dbReference>
<dbReference type="Gene3D" id="1.10.150.390">
    <property type="match status" value="1"/>
</dbReference>
<dbReference type="Gene3D" id="1.10.1790.20">
    <property type="match status" value="1"/>
</dbReference>
<dbReference type="Gene3D" id="1.10.40.90">
    <property type="match status" value="1"/>
</dbReference>
<dbReference type="Gene3D" id="2.40.40.20">
    <property type="match status" value="1"/>
</dbReference>
<dbReference type="Gene3D" id="2.40.50.100">
    <property type="match status" value="3"/>
</dbReference>
<dbReference type="Gene3D" id="4.10.860.120">
    <property type="entry name" value="RNA polymerase II, clamp domain"/>
    <property type="match status" value="1"/>
</dbReference>
<dbReference type="Gene3D" id="1.10.274.100">
    <property type="entry name" value="RNA polymerase Rpb1, domain 3"/>
    <property type="match status" value="1"/>
</dbReference>
<dbReference type="HAMAP" id="MF_01322">
    <property type="entry name" value="RNApol_bact_RpoC"/>
    <property type="match status" value="1"/>
</dbReference>
<dbReference type="InterPro" id="IPR045867">
    <property type="entry name" value="DNA-dir_RpoC_beta_prime"/>
</dbReference>
<dbReference type="InterPro" id="IPR012754">
    <property type="entry name" value="DNA-dir_RpoC_beta_prime_bact"/>
</dbReference>
<dbReference type="InterPro" id="IPR000722">
    <property type="entry name" value="RNA_pol_asu"/>
</dbReference>
<dbReference type="InterPro" id="IPR006592">
    <property type="entry name" value="RNA_pol_N"/>
</dbReference>
<dbReference type="InterPro" id="IPR007080">
    <property type="entry name" value="RNA_pol_Rpb1_1"/>
</dbReference>
<dbReference type="InterPro" id="IPR007066">
    <property type="entry name" value="RNA_pol_Rpb1_3"/>
</dbReference>
<dbReference type="InterPro" id="IPR042102">
    <property type="entry name" value="RNA_pol_Rpb1_3_sf"/>
</dbReference>
<dbReference type="InterPro" id="IPR007083">
    <property type="entry name" value="RNA_pol_Rpb1_4"/>
</dbReference>
<dbReference type="InterPro" id="IPR007081">
    <property type="entry name" value="RNA_pol_Rpb1_5"/>
</dbReference>
<dbReference type="InterPro" id="IPR044893">
    <property type="entry name" value="RNA_pol_Rpb1_clamp_domain"/>
</dbReference>
<dbReference type="InterPro" id="IPR038120">
    <property type="entry name" value="Rpb1_funnel_sf"/>
</dbReference>
<dbReference type="NCBIfam" id="TIGR02386">
    <property type="entry name" value="rpoC_TIGR"/>
    <property type="match status" value="1"/>
</dbReference>
<dbReference type="PANTHER" id="PTHR19376">
    <property type="entry name" value="DNA-DIRECTED RNA POLYMERASE"/>
    <property type="match status" value="1"/>
</dbReference>
<dbReference type="PANTHER" id="PTHR19376:SF54">
    <property type="entry name" value="DNA-DIRECTED RNA POLYMERASE SUBUNIT BETA"/>
    <property type="match status" value="1"/>
</dbReference>
<dbReference type="Pfam" id="PF04997">
    <property type="entry name" value="RNA_pol_Rpb1_1"/>
    <property type="match status" value="1"/>
</dbReference>
<dbReference type="Pfam" id="PF00623">
    <property type="entry name" value="RNA_pol_Rpb1_2"/>
    <property type="match status" value="2"/>
</dbReference>
<dbReference type="Pfam" id="PF04983">
    <property type="entry name" value="RNA_pol_Rpb1_3"/>
    <property type="match status" value="1"/>
</dbReference>
<dbReference type="Pfam" id="PF05000">
    <property type="entry name" value="RNA_pol_Rpb1_4"/>
    <property type="match status" value="1"/>
</dbReference>
<dbReference type="Pfam" id="PF04998">
    <property type="entry name" value="RNA_pol_Rpb1_5"/>
    <property type="match status" value="1"/>
</dbReference>
<dbReference type="SMART" id="SM00663">
    <property type="entry name" value="RPOLA_N"/>
    <property type="match status" value="1"/>
</dbReference>
<dbReference type="SUPFAM" id="SSF64484">
    <property type="entry name" value="beta and beta-prime subunits of DNA dependent RNA-polymerase"/>
    <property type="match status" value="1"/>
</dbReference>
<protein>
    <recommendedName>
        <fullName evidence="1">DNA-directed RNA polymerase subunit beta'</fullName>
        <shortName evidence="1">RNAP subunit beta'</shortName>
        <ecNumber evidence="1">2.7.7.6</ecNumber>
    </recommendedName>
    <alternativeName>
        <fullName evidence="1">RNA polymerase subunit beta'</fullName>
    </alternativeName>
    <alternativeName>
        <fullName evidence="1">Transcriptase subunit beta'</fullName>
    </alternativeName>
</protein>